<keyword id="KW-0004">4Fe-4S</keyword>
<keyword id="KW-0408">Iron</keyword>
<keyword id="KW-0411">Iron-sulfur</keyword>
<keyword id="KW-0472">Membrane</keyword>
<keyword id="KW-0479">Metal-binding</keyword>
<keyword id="KW-0520">NAD</keyword>
<keyword id="KW-0521">NADP</keyword>
<keyword id="KW-0618">Plastoquinone</keyword>
<keyword id="KW-0874">Quinone</keyword>
<keyword id="KW-0793">Thylakoid</keyword>
<keyword id="KW-1278">Translocase</keyword>
<keyword id="KW-0813">Transport</keyword>
<accession>Q9XBL7</accession>
<accession>Q3MC05</accession>
<evidence type="ECO:0000255" key="1">
    <source>
        <dbReference type="HAMAP-Rule" id="MF_01356"/>
    </source>
</evidence>
<gene>
    <name evidence="1" type="primary">ndhK</name>
    <name type="ordered locus">Ava_1859</name>
</gene>
<name>NDHK_TRIV2</name>
<organism>
    <name type="scientific">Trichormus variabilis (strain ATCC 29413 / PCC 7937)</name>
    <name type="common">Anabaena variabilis</name>
    <dbReference type="NCBI Taxonomy" id="240292"/>
    <lineage>
        <taxon>Bacteria</taxon>
        <taxon>Bacillati</taxon>
        <taxon>Cyanobacteriota</taxon>
        <taxon>Cyanophyceae</taxon>
        <taxon>Nostocales</taxon>
        <taxon>Nostocaceae</taxon>
        <taxon>Trichormus</taxon>
    </lineage>
</organism>
<protein>
    <recommendedName>
        <fullName evidence="1">NAD(P)H-quinone oxidoreductase subunit K</fullName>
        <ecNumber evidence="1">7.1.1.-</ecNumber>
    </recommendedName>
    <alternativeName>
        <fullName evidence="1">NAD(P)H dehydrogenase I subunit K</fullName>
    </alternativeName>
    <alternativeName>
        <fullName evidence="1">NDH-1 subunit K</fullName>
        <shortName evidence="1">NDH-K</shortName>
    </alternativeName>
</protein>
<feature type="chain" id="PRO_0000118759" description="NAD(P)H-quinone oxidoreductase subunit K">
    <location>
        <begin position="1"/>
        <end position="245"/>
    </location>
</feature>
<feature type="binding site" evidence="1">
    <location>
        <position position="58"/>
    </location>
    <ligand>
        <name>[4Fe-4S] cluster</name>
        <dbReference type="ChEBI" id="CHEBI:49883"/>
    </ligand>
</feature>
<feature type="binding site" evidence="1">
    <location>
        <position position="59"/>
    </location>
    <ligand>
        <name>[4Fe-4S] cluster</name>
        <dbReference type="ChEBI" id="CHEBI:49883"/>
    </ligand>
</feature>
<feature type="binding site" evidence="1">
    <location>
        <position position="123"/>
    </location>
    <ligand>
        <name>[4Fe-4S] cluster</name>
        <dbReference type="ChEBI" id="CHEBI:49883"/>
    </ligand>
</feature>
<feature type="binding site" evidence="1">
    <location>
        <position position="154"/>
    </location>
    <ligand>
        <name>[4Fe-4S] cluster</name>
        <dbReference type="ChEBI" id="CHEBI:49883"/>
    </ligand>
</feature>
<sequence>MVLNSDLTTQDKERIINPIERPTVTQDLSENVILTTVDDLYNWARLSSLWPLLFGTACCFIEFAALIGSRFDFDRFGLIPRSSPRQADLIITAGTITMKMAPQLVRLYEQMPEPKYVIAMGACTITGGMFSVDSPTAVRGVDKLIPVDVYLPGCPPRPEAIIDAIIKLRKKIANDSMQERSLIRQTHRFYSTTHNLKPVAEILTGKYMQSETRFNPPKELTEAIGLPVPPALLTSQTQKEEQKRG</sequence>
<proteinExistence type="inferred from homology"/>
<comment type="function">
    <text evidence="1">NDH-1 shuttles electrons from an unknown electron donor, via FMN and iron-sulfur (Fe-S) centers, to quinones in the respiratory and/or the photosynthetic chain. The immediate electron acceptor for the enzyme in this species is believed to be plastoquinone. Couples the redox reaction to proton translocation, and thus conserves the redox energy in a proton gradient. Cyanobacterial NDH-1 also plays a role in inorganic carbon-concentration.</text>
</comment>
<comment type="catalytic activity">
    <reaction evidence="1">
        <text>a plastoquinone + NADH + (n+1) H(+)(in) = a plastoquinol + NAD(+) + n H(+)(out)</text>
        <dbReference type="Rhea" id="RHEA:42608"/>
        <dbReference type="Rhea" id="RHEA-COMP:9561"/>
        <dbReference type="Rhea" id="RHEA-COMP:9562"/>
        <dbReference type="ChEBI" id="CHEBI:15378"/>
        <dbReference type="ChEBI" id="CHEBI:17757"/>
        <dbReference type="ChEBI" id="CHEBI:57540"/>
        <dbReference type="ChEBI" id="CHEBI:57945"/>
        <dbReference type="ChEBI" id="CHEBI:62192"/>
    </reaction>
</comment>
<comment type="catalytic activity">
    <reaction evidence="1">
        <text>a plastoquinone + NADPH + (n+1) H(+)(in) = a plastoquinol + NADP(+) + n H(+)(out)</text>
        <dbReference type="Rhea" id="RHEA:42612"/>
        <dbReference type="Rhea" id="RHEA-COMP:9561"/>
        <dbReference type="Rhea" id="RHEA-COMP:9562"/>
        <dbReference type="ChEBI" id="CHEBI:15378"/>
        <dbReference type="ChEBI" id="CHEBI:17757"/>
        <dbReference type="ChEBI" id="CHEBI:57783"/>
        <dbReference type="ChEBI" id="CHEBI:58349"/>
        <dbReference type="ChEBI" id="CHEBI:62192"/>
    </reaction>
</comment>
<comment type="cofactor">
    <cofactor evidence="1">
        <name>[4Fe-4S] cluster</name>
        <dbReference type="ChEBI" id="CHEBI:49883"/>
    </cofactor>
    <text evidence="1">Binds 1 [4Fe-4S] cluster.</text>
</comment>
<comment type="subunit">
    <text evidence="1">NDH-1 can be composed of about 15 different subunits; different subcomplexes with different compositions have been identified which probably have different functions.</text>
</comment>
<comment type="subcellular location">
    <subcellularLocation>
        <location evidence="1">Cellular thylakoid membrane</location>
        <topology evidence="1">Peripheral membrane protein</topology>
        <orientation evidence="1">Cytoplasmic side</orientation>
    </subcellularLocation>
</comment>
<comment type="similarity">
    <text evidence="1">Belongs to the complex I 20 kDa subunit family.</text>
</comment>
<reference key="1">
    <citation type="submission" date="1998-10" db="EMBL/GenBank/DDBJ databases">
        <title>Isolation and characterisation of the ndhCKJ gene-cluster of Anabaena variabilis.</title>
        <authorList>
            <person name="Happe T."/>
            <person name="Schiefer W."/>
            <person name="Boehme H."/>
        </authorList>
    </citation>
    <scope>NUCLEOTIDE SEQUENCE [GENOMIC DNA]</scope>
</reference>
<reference key="2">
    <citation type="journal article" date="2014" name="Stand. Genomic Sci.">
        <title>Complete genome sequence of Anabaena variabilis ATCC 29413.</title>
        <authorList>
            <person name="Thiel T."/>
            <person name="Pratte B.S."/>
            <person name="Zhong J."/>
            <person name="Goodwin L."/>
            <person name="Copeland A."/>
            <person name="Lucas S."/>
            <person name="Han C."/>
            <person name="Pitluck S."/>
            <person name="Land M.L."/>
            <person name="Kyrpides N.C."/>
            <person name="Woyke T."/>
        </authorList>
    </citation>
    <scope>NUCLEOTIDE SEQUENCE [LARGE SCALE GENOMIC DNA]</scope>
    <source>
        <strain>ATCC 29413 / PCC 7937</strain>
    </source>
</reference>
<dbReference type="EC" id="7.1.1.-" evidence="1"/>
<dbReference type="EMBL" id="AJ012181">
    <property type="protein sequence ID" value="CAB45647.1"/>
    <property type="molecule type" value="Genomic_DNA"/>
</dbReference>
<dbReference type="EMBL" id="CP000117">
    <property type="protein sequence ID" value="ABA21481.1"/>
    <property type="molecule type" value="Genomic_DNA"/>
</dbReference>
<dbReference type="SMR" id="Q9XBL7"/>
<dbReference type="STRING" id="240292.Ava_1859"/>
<dbReference type="KEGG" id="ava:Ava_1859"/>
<dbReference type="eggNOG" id="COG0377">
    <property type="taxonomic scope" value="Bacteria"/>
</dbReference>
<dbReference type="HOGENOM" id="CLU_055737_2_1_3"/>
<dbReference type="Proteomes" id="UP000002533">
    <property type="component" value="Chromosome"/>
</dbReference>
<dbReference type="GO" id="GO:0031676">
    <property type="term" value="C:plasma membrane-derived thylakoid membrane"/>
    <property type="evidence" value="ECO:0007669"/>
    <property type="project" value="UniProtKB-SubCell"/>
</dbReference>
<dbReference type="GO" id="GO:0045271">
    <property type="term" value="C:respiratory chain complex I"/>
    <property type="evidence" value="ECO:0007669"/>
    <property type="project" value="TreeGrafter"/>
</dbReference>
<dbReference type="GO" id="GO:0051539">
    <property type="term" value="F:4 iron, 4 sulfur cluster binding"/>
    <property type="evidence" value="ECO:0007669"/>
    <property type="project" value="UniProtKB-KW"/>
</dbReference>
<dbReference type="GO" id="GO:0005506">
    <property type="term" value="F:iron ion binding"/>
    <property type="evidence" value="ECO:0007669"/>
    <property type="project" value="UniProtKB-UniRule"/>
</dbReference>
<dbReference type="GO" id="GO:0008137">
    <property type="term" value="F:NADH dehydrogenase (ubiquinone) activity"/>
    <property type="evidence" value="ECO:0007669"/>
    <property type="project" value="InterPro"/>
</dbReference>
<dbReference type="GO" id="GO:0048038">
    <property type="term" value="F:quinone binding"/>
    <property type="evidence" value="ECO:0007669"/>
    <property type="project" value="UniProtKB-KW"/>
</dbReference>
<dbReference type="GO" id="GO:0009060">
    <property type="term" value="P:aerobic respiration"/>
    <property type="evidence" value="ECO:0007669"/>
    <property type="project" value="TreeGrafter"/>
</dbReference>
<dbReference type="GO" id="GO:0015990">
    <property type="term" value="P:electron transport coupled proton transport"/>
    <property type="evidence" value="ECO:0007669"/>
    <property type="project" value="TreeGrafter"/>
</dbReference>
<dbReference type="GO" id="GO:0019684">
    <property type="term" value="P:photosynthesis, light reaction"/>
    <property type="evidence" value="ECO:0007669"/>
    <property type="project" value="UniProtKB-UniRule"/>
</dbReference>
<dbReference type="FunFam" id="3.40.50.12280:FF:000003">
    <property type="entry name" value="NAD(P)H-quinone oxidoreductase subunit K, chloroplastic"/>
    <property type="match status" value="1"/>
</dbReference>
<dbReference type="Gene3D" id="3.40.50.12280">
    <property type="match status" value="1"/>
</dbReference>
<dbReference type="HAMAP" id="MF_01356">
    <property type="entry name" value="NDH1_NuoB"/>
    <property type="match status" value="1"/>
</dbReference>
<dbReference type="InterPro" id="IPR006137">
    <property type="entry name" value="NADH_UbQ_OxRdtase-like_20kDa"/>
</dbReference>
<dbReference type="InterPro" id="IPR006138">
    <property type="entry name" value="NADH_UQ_OxRdtase_20Kd_su"/>
</dbReference>
<dbReference type="NCBIfam" id="TIGR01957">
    <property type="entry name" value="nuoB_fam"/>
    <property type="match status" value="1"/>
</dbReference>
<dbReference type="NCBIfam" id="NF005012">
    <property type="entry name" value="PRK06411.1"/>
    <property type="match status" value="1"/>
</dbReference>
<dbReference type="PANTHER" id="PTHR11995">
    <property type="entry name" value="NADH DEHYDROGENASE"/>
    <property type="match status" value="1"/>
</dbReference>
<dbReference type="PANTHER" id="PTHR11995:SF14">
    <property type="entry name" value="NADH DEHYDROGENASE [UBIQUINONE] IRON-SULFUR PROTEIN 7, MITOCHONDRIAL"/>
    <property type="match status" value="1"/>
</dbReference>
<dbReference type="Pfam" id="PF01058">
    <property type="entry name" value="Oxidored_q6"/>
    <property type="match status" value="1"/>
</dbReference>
<dbReference type="SUPFAM" id="SSF56770">
    <property type="entry name" value="HydA/Nqo6-like"/>
    <property type="match status" value="1"/>
</dbReference>
<dbReference type="PROSITE" id="PS01150">
    <property type="entry name" value="COMPLEX1_20K"/>
    <property type="match status" value="1"/>
</dbReference>